<feature type="chain" id="PRO_0000444934" description="Cytochrome P450 monooxygenase orf6" evidence="2">
    <location>
        <begin position="1"/>
        <end position="502"/>
    </location>
</feature>
<feature type="transmembrane region" description="Helical" evidence="2">
    <location>
        <begin position="3"/>
        <end position="25"/>
    </location>
</feature>
<feature type="binding site" description="axial binding residue" evidence="1">
    <location>
        <position position="445"/>
    </location>
    <ligand>
        <name>heme</name>
        <dbReference type="ChEBI" id="CHEBI:30413"/>
    </ligand>
    <ligandPart>
        <name>Fe</name>
        <dbReference type="ChEBI" id="CHEBI:18248"/>
    </ligandPart>
</feature>
<feature type="glycosylation site" description="N-linked (GlcNAc...) asparagine" evidence="3">
    <location>
        <position position="382"/>
    </location>
</feature>
<reference key="1">
    <citation type="journal article" date="2014" name="ACS Chem. Biol.">
        <title>Fungal polyketide synthase product chain-length control by partnering thiohydrolase.</title>
        <authorList>
            <person name="Zabala A.O."/>
            <person name="Chooi Y.H."/>
            <person name="Choi M.S."/>
            <person name="Lin H.C."/>
            <person name="Tang Y."/>
        </authorList>
    </citation>
    <scope>NUCLEOTIDE SEQUENCE [GENOMIC DNA]</scope>
    <scope>FUNCTION</scope>
    <scope>INDUCTION</scope>
    <source>
        <strain>ATCC 58665</strain>
    </source>
</reference>
<keyword id="KW-0325">Glycoprotein</keyword>
<keyword id="KW-0349">Heme</keyword>
<keyword id="KW-0408">Iron</keyword>
<keyword id="KW-0472">Membrane</keyword>
<keyword id="KW-0479">Metal-binding</keyword>
<keyword id="KW-0503">Monooxygenase</keyword>
<keyword id="KW-0560">Oxidoreductase</keyword>
<keyword id="KW-0812">Transmembrane</keyword>
<keyword id="KW-1133">Transmembrane helix</keyword>
<accession>A0A068ACU3</accession>
<proteinExistence type="evidence at transcript level"/>
<comment type="function">
    <text evidence="4">Cytochrome P450 monooxygenase; part of the gene cluster that mediates the biosynthesis of brefeldin A (BFA), a protein transport inhibitor that shows antiviral, antifungal, and antitumor properties (PubMed:24845309). The proposed biosynthesis of BFA involves formation of an acyclic polyketide chain that is differentially tailored throughout the backbone (PubMed:24845309). The highly reducing polyketide synthase Bref-PKS is proposed to synthesize the precisely reduced octaketide precursor, which could then be directly offloaded by the thiohydrolase enzyme Bref-TH followed by a cytochrome P450 monooxygenase-mediated formation of the cyclopentane ring and macrocyclization to afford 7-deoxy BFA. Alternatively, the first ring annulation can also occur on the ACP-tethered intermediate before the thiohydrolase release and lactonization (PubMed:24845309). The C7-hydroxylation by another cytochrome P450 monooxygenase is believed to be the final step in the process to obtain the final structure of BFA (PubMed:24845309). In addition to the HRPKS Bref-PKS and the thiohydrolase Bref-TH, the brefeldin A biosynthesis cluster contains 4 cytochrome p450 monooxygenases (called orf3 to orf6), as well a the probable cluster-specific transcription regulator orf8 (PubMed:24845309).</text>
</comment>
<comment type="cofactor">
    <cofactor evidence="1">
        <name>heme</name>
        <dbReference type="ChEBI" id="CHEBI:30413"/>
    </cofactor>
</comment>
<comment type="pathway">
    <text evidence="7">Mycotoxin biosynthesis.</text>
</comment>
<comment type="subcellular location">
    <subcellularLocation>
        <location evidence="2">Membrane</location>
        <topology evidence="2">Single-pass membrane protein</topology>
    </subcellularLocation>
</comment>
<comment type="induction">
    <text evidence="4">Coexpressed with the other cluster genes on brefeldin A production optimized medium.</text>
</comment>
<comment type="similarity">
    <text evidence="6">Belongs to the cytochrome P450 family.</text>
</comment>
<evidence type="ECO:0000250" key="1">
    <source>
        <dbReference type="UniProtKB" id="P04798"/>
    </source>
</evidence>
<evidence type="ECO:0000255" key="2"/>
<evidence type="ECO:0000255" key="3">
    <source>
        <dbReference type="PROSITE-ProRule" id="PRU00498"/>
    </source>
</evidence>
<evidence type="ECO:0000269" key="4">
    <source>
    </source>
</evidence>
<evidence type="ECO:0000303" key="5">
    <source>
    </source>
</evidence>
<evidence type="ECO:0000305" key="6"/>
<evidence type="ECO:0000305" key="7">
    <source>
    </source>
</evidence>
<name>BREF6_EUPBR</name>
<organism>
    <name type="scientific">Eupenicillium brefeldianum</name>
    <name type="common">Penicillium brefeldianum</name>
    <dbReference type="NCBI Taxonomy" id="1131482"/>
    <lineage>
        <taxon>Eukaryota</taxon>
        <taxon>Fungi</taxon>
        <taxon>Dikarya</taxon>
        <taxon>Ascomycota</taxon>
        <taxon>Pezizomycotina</taxon>
        <taxon>Eurotiomycetes</taxon>
        <taxon>Eurotiomycetidae</taxon>
        <taxon>Eurotiales</taxon>
        <taxon>Aspergillaceae</taxon>
        <taxon>Penicillium</taxon>
    </lineage>
</organism>
<sequence>MLALWVLAVALVAYFLCLSIYRLFLHPLANIPGPKLCALTGWYEVFWDIVVGGQFTFKIEEWHKTYGPVMRIGPNEVHFNDPDFYNELYTTTAAYQKPAEWRYRFGFGSALFDTVDHEHHAKRRAPLAAFFSRSKILEFSPFIQEQTDLLVQRIQEYEGQVICANEAFDALTMDIIGYYAFGLSYRSIDYPKFQAPCNHVTEDVARMVHTGAHFPWVFTILRSIPQAIVSLLAPPMKKIFKFNEEIAAQIRRILKNRVNLDQEKNFHRTIFHEILNSKLDPSELTQERLQMEAGSLVGAALETSKMTTALAIYYILAQPDVEKKLREELRTAMPDPGKILSVPELEQLPYLAACIREALRLAIGVSQRIRRYNPHAPTQYKNYTIPPNTVFGMCHWEQLRDARVWDRPYEFLPERWLANNGNPLALNGQPLAKYFVPFHRGPRGCLGKEMGMAQLNIGLATLFRRVDHLELFETDQSAVDIVADYFVPLCVKGSKGVRVLVK</sequence>
<protein>
    <recommendedName>
        <fullName evidence="5">Cytochrome P450 monooxygenase orf6</fullName>
        <ecNumber evidence="7">1.-.-.-</ecNumber>
    </recommendedName>
    <alternativeName>
        <fullName evidence="5">Brefeldin A biosynthesis cluster protein orf6</fullName>
    </alternativeName>
</protein>
<dbReference type="EC" id="1.-.-.-" evidence="7"/>
<dbReference type="EMBL" id="KJ728786">
    <property type="protein sequence ID" value="AIA58898.1"/>
    <property type="molecule type" value="Genomic_DNA"/>
</dbReference>
<dbReference type="SMR" id="A0A068ACU3"/>
<dbReference type="GlyCosmos" id="A0A068ACU3">
    <property type="glycosylation" value="1 site, No reported glycans"/>
</dbReference>
<dbReference type="GO" id="GO:0016020">
    <property type="term" value="C:membrane"/>
    <property type="evidence" value="ECO:0007669"/>
    <property type="project" value="UniProtKB-SubCell"/>
</dbReference>
<dbReference type="GO" id="GO:0020037">
    <property type="term" value="F:heme binding"/>
    <property type="evidence" value="ECO:0007669"/>
    <property type="project" value="InterPro"/>
</dbReference>
<dbReference type="GO" id="GO:0005506">
    <property type="term" value="F:iron ion binding"/>
    <property type="evidence" value="ECO:0007669"/>
    <property type="project" value="InterPro"/>
</dbReference>
<dbReference type="GO" id="GO:0004497">
    <property type="term" value="F:monooxygenase activity"/>
    <property type="evidence" value="ECO:0007669"/>
    <property type="project" value="UniProtKB-KW"/>
</dbReference>
<dbReference type="GO" id="GO:0016705">
    <property type="term" value="F:oxidoreductase activity, acting on paired donors, with incorporation or reduction of molecular oxygen"/>
    <property type="evidence" value="ECO:0007669"/>
    <property type="project" value="InterPro"/>
</dbReference>
<dbReference type="GO" id="GO:0043386">
    <property type="term" value="P:mycotoxin biosynthetic process"/>
    <property type="evidence" value="ECO:0007669"/>
    <property type="project" value="UniProtKB-ARBA"/>
</dbReference>
<dbReference type="CDD" id="cd11062">
    <property type="entry name" value="CYP58-like"/>
    <property type="match status" value="1"/>
</dbReference>
<dbReference type="Gene3D" id="1.10.630.10">
    <property type="entry name" value="Cytochrome P450"/>
    <property type="match status" value="1"/>
</dbReference>
<dbReference type="InterPro" id="IPR001128">
    <property type="entry name" value="Cyt_P450"/>
</dbReference>
<dbReference type="InterPro" id="IPR017972">
    <property type="entry name" value="Cyt_P450_CS"/>
</dbReference>
<dbReference type="InterPro" id="IPR002401">
    <property type="entry name" value="Cyt_P450_E_grp-I"/>
</dbReference>
<dbReference type="InterPro" id="IPR036396">
    <property type="entry name" value="Cyt_P450_sf"/>
</dbReference>
<dbReference type="InterPro" id="IPR050121">
    <property type="entry name" value="Cytochrome_P450_monoxygenase"/>
</dbReference>
<dbReference type="PANTHER" id="PTHR24305">
    <property type="entry name" value="CYTOCHROME P450"/>
    <property type="match status" value="1"/>
</dbReference>
<dbReference type="PANTHER" id="PTHR24305:SF231">
    <property type="entry name" value="P450, PUTATIVE (EUROFUNG)-RELATED"/>
    <property type="match status" value="1"/>
</dbReference>
<dbReference type="Pfam" id="PF00067">
    <property type="entry name" value="p450"/>
    <property type="match status" value="1"/>
</dbReference>
<dbReference type="PRINTS" id="PR00463">
    <property type="entry name" value="EP450I"/>
</dbReference>
<dbReference type="SUPFAM" id="SSF48264">
    <property type="entry name" value="Cytochrome P450"/>
    <property type="match status" value="1"/>
</dbReference>
<dbReference type="PROSITE" id="PS00086">
    <property type="entry name" value="CYTOCHROME_P450"/>
    <property type="match status" value="1"/>
</dbReference>
<gene>
    <name evidence="5" type="primary">orf6</name>
</gene>